<reference key="1">
    <citation type="journal article" date="1989" name="Nucleic Acids Res.">
        <title>Nucleotide sequence of two toxin genes from Bacillus sphaericus IAB59: sequence comparisons between five highly toxinogenic strains.</title>
        <authorList>
            <person name="Berry C."/>
            <person name="Jackson-Yap J."/>
            <person name="Oei C."/>
            <person name="Hindley J."/>
        </authorList>
    </citation>
    <scope>NUCLEOTIDE SEQUENCE [GENOMIC DNA]</scope>
    <source>
        <strain>IAB59</strain>
    </source>
</reference>
<reference key="2">
    <citation type="journal article" date="1993" name="J. Bacteriol.">
        <title>Genetic determinants of host ranges of Bacillus sphaericus mosquito larvicidal toxins.</title>
        <authorList>
            <person name="Berry C."/>
            <person name="Hindley J."/>
            <person name="Ehrhardt A.F."/>
            <person name="Grounds T."/>
            <person name="de Souza I."/>
            <person name="Davidson E.W."/>
        </authorList>
    </citation>
    <scope>HOST RANGE</scope>
    <source>
        <strain>IAB59</strain>
    </source>
</reference>
<evidence type="ECO:0000250" key="1">
    <source>
        <dbReference type="UniProtKB" id="P05516"/>
    </source>
</evidence>
<evidence type="ECO:0000250" key="2">
    <source>
        <dbReference type="UniProtKB" id="P06575"/>
    </source>
</evidence>
<evidence type="ECO:0000269" key="3">
    <source>
    </source>
</evidence>
<evidence type="ECO:0000303" key="4">
    <source>
    </source>
</evidence>
<evidence type="ECO:0000305" key="5"/>
<accession>P12963</accession>
<dbReference type="EMBL" id="X14964">
    <property type="protein sequence ID" value="CAA33087.1"/>
    <property type="molecule type" value="Genomic_DNA"/>
</dbReference>
<dbReference type="PIR" id="S07712">
    <property type="entry name" value="S07712"/>
</dbReference>
<dbReference type="RefSeq" id="WP_197223364.1">
    <property type="nucleotide sequence ID" value="NZ_CP071741.1"/>
</dbReference>
<dbReference type="SMR" id="P12963"/>
<dbReference type="GO" id="GO:0090729">
    <property type="term" value="F:toxin activity"/>
    <property type="evidence" value="ECO:0007669"/>
    <property type="project" value="UniProtKB-KW"/>
</dbReference>
<dbReference type="GO" id="GO:0030435">
    <property type="term" value="P:sporulation resulting in formation of a cellular spore"/>
    <property type="evidence" value="ECO:0007669"/>
    <property type="project" value="UniProtKB-KW"/>
</dbReference>
<dbReference type="CDD" id="cd23429">
    <property type="entry name" value="beta-trefoil_Ricin_BinAB"/>
    <property type="match status" value="1"/>
</dbReference>
<dbReference type="InterPro" id="IPR035992">
    <property type="entry name" value="Ricin_B-like_lectins"/>
</dbReference>
<dbReference type="InterPro" id="IPR008872">
    <property type="entry name" value="Toxin_P42"/>
</dbReference>
<dbReference type="Pfam" id="PF05431">
    <property type="entry name" value="Toxin_10"/>
    <property type="match status" value="1"/>
</dbReference>
<dbReference type="SUPFAM" id="SSF50370">
    <property type="entry name" value="Ricin B-like lectins"/>
    <property type="match status" value="1"/>
</dbReference>
<comment type="function">
    <text evidence="1 3">Component of a binary toxin active against Culex and some Aedes mosquito larvae; mortality towards both C.quinquefasciatus and A.atropalpus is maximal by 48 hours. A.aegypti is not very susceptible to this toxin (PubMed:8419297). Binary toxin internalization into host gut cells requires both proteins (By similarity).</text>
</comment>
<comment type="subunit">
    <text evidence="2">Forms a heterodimer with BinB.</text>
</comment>
<comment type="subcellular location">
    <subcellularLocation>
        <location evidence="1">Spore</location>
        <location evidence="1">Perispore</location>
    </subcellularLocation>
</comment>
<comment type="developmental stage">
    <text evidence="1">Accumulates next to spores within the exosporeum.</text>
</comment>
<comment type="domain">
    <text evidence="2">Has an N-terminal beta-trefoil domain and a C-terminal pore-forming domain. The trefoil domain has barrel and cap subdomains; the cap has 3 carbohydrate-binding modules while the barrel is involved in host cell receptor binding. At neutral pH the carbohydrate-binding modules are accessible on the toxin surface but the barrel subdomain is not.</text>
</comment>
<comment type="PTM">
    <text evidence="2">Processed by proteases in the mosquito gut, probably at both the N- and C-termini.</text>
</comment>
<comment type="similarity">
    <text evidence="5">Belongs to the toxin_10 family.</text>
</comment>
<protein>
    <recommendedName>
        <fullName evidence="5">Binary larvicide subunit BinA</fullName>
    </recommendedName>
    <alternativeName>
        <fullName evidence="4">41.9 kDa insecticidal toxin</fullName>
    </alternativeName>
</protein>
<organism>
    <name type="scientific">Lysinibacillus sphaericus</name>
    <name type="common">Bacillus sphaericus</name>
    <dbReference type="NCBI Taxonomy" id="1421"/>
    <lineage>
        <taxon>Bacteria</taxon>
        <taxon>Bacillati</taxon>
        <taxon>Bacillota</taxon>
        <taxon>Bacilli</taxon>
        <taxon>Bacillales</taxon>
        <taxon>Bacillaceae</taxon>
        <taxon>Lysinibacillus</taxon>
    </lineage>
</organism>
<sequence length="370" mass="41978">MRNLDFIDSFIPTEGKYIRVMDFYNSEYPFCIHAPSAPNGDIMTEICSRENNQYFIFFPTDDGRVIIANRHNGSVFTGEATSVVSDIYTGSPLQFFREVKRTMETYYLAIQNPESATDVRALEPHSHELPSRLYYTNNIENNSNILISNKEQIYLTLPSLPENEQYPKTPVLSGIDDIGPNQSEKSIIGSTLIPCIMVSDFISLGERMKTTPYYYVKHTQYWQSMWSALFPPGSKETKTEKSGITDTSQISMTDGINVSIGADFGLRFGNKTFGIKGGFTYDTKTQITNTSQLLIETTYTREYTNTENFPVRYTGYVLASEFTLHRSDGTQVNTIPWVALNDNYTTIARYPHFASEPLLGNTKIITDDQN</sequence>
<name>BINA3_LYSSH</name>
<keyword id="KW-1015">Disulfide bond</keyword>
<keyword id="KW-0749">Sporulation</keyword>
<keyword id="KW-0800">Toxin</keyword>
<keyword id="KW-0843">Virulence</keyword>
<gene>
    <name type="primary">binA</name>
</gene>
<feature type="propeptide" id="PRO_0000448620" evidence="2">
    <location>
        <begin position="1"/>
        <end position="6"/>
    </location>
</feature>
<feature type="chain" id="PRO_0000174113" description="Binary larvicide subunit BinA">
    <location>
        <begin position="7"/>
        <end position="370"/>
    </location>
</feature>
<feature type="region of interest" description="Beta-trefoil domain" evidence="2">
    <location>
        <begin position="1"/>
        <end position="155"/>
    </location>
</feature>
<feature type="region of interest" description="Pore-forming domain" evidence="2">
    <location>
        <begin position="156"/>
        <end position="370"/>
    </location>
</feature>
<feature type="disulfide bond" evidence="2">
    <location>
        <begin position="31"/>
        <end position="47"/>
    </location>
</feature>
<proteinExistence type="inferred from homology"/>